<organism>
    <name type="scientific">Mycobacterium avium (strain 104)</name>
    <dbReference type="NCBI Taxonomy" id="243243"/>
    <lineage>
        <taxon>Bacteria</taxon>
        <taxon>Bacillati</taxon>
        <taxon>Actinomycetota</taxon>
        <taxon>Actinomycetes</taxon>
        <taxon>Mycobacteriales</taxon>
        <taxon>Mycobacteriaceae</taxon>
        <taxon>Mycobacterium</taxon>
        <taxon>Mycobacterium avium complex (MAC)</taxon>
    </lineage>
</organism>
<proteinExistence type="inferred from homology"/>
<gene>
    <name type="ordered locus">MAV_2803</name>
</gene>
<comment type="function">
    <text evidence="1">Exhibits S-adenosyl-L-methionine-dependent methyltransferase activity.</text>
</comment>
<comment type="similarity">
    <text evidence="2">Belongs to the UPF0677 family.</text>
</comment>
<name>Y2803_MYCA1</name>
<protein>
    <recommendedName>
        <fullName>Putative S-adenosyl-L-methionine-dependent methyltransferase MAV_2803</fullName>
        <ecNumber>2.1.1.-</ecNumber>
    </recommendedName>
</protein>
<dbReference type="EC" id="2.1.1.-"/>
<dbReference type="EMBL" id="CP000479">
    <property type="protein sequence ID" value="ABK68819.1"/>
    <property type="molecule type" value="Genomic_DNA"/>
</dbReference>
<dbReference type="RefSeq" id="WP_011725057.1">
    <property type="nucleotide sequence ID" value="NC_008595.1"/>
</dbReference>
<dbReference type="SMR" id="A0QGF2"/>
<dbReference type="KEGG" id="mav:MAV_2803"/>
<dbReference type="HOGENOM" id="CLU_056160_2_1_11"/>
<dbReference type="Proteomes" id="UP000001574">
    <property type="component" value="Chromosome"/>
</dbReference>
<dbReference type="GO" id="GO:0008168">
    <property type="term" value="F:methyltransferase activity"/>
    <property type="evidence" value="ECO:0007669"/>
    <property type="project" value="UniProtKB-KW"/>
</dbReference>
<dbReference type="GO" id="GO:0032259">
    <property type="term" value="P:methylation"/>
    <property type="evidence" value="ECO:0007669"/>
    <property type="project" value="UniProtKB-KW"/>
</dbReference>
<dbReference type="Gene3D" id="3.40.50.150">
    <property type="entry name" value="Vaccinia Virus protein VP39"/>
    <property type="match status" value="1"/>
</dbReference>
<dbReference type="InterPro" id="IPR007213">
    <property type="entry name" value="Ppm1/Ppm2/Tcmp"/>
</dbReference>
<dbReference type="InterPro" id="IPR029063">
    <property type="entry name" value="SAM-dependent_MTases_sf"/>
</dbReference>
<dbReference type="InterPro" id="IPR011610">
    <property type="entry name" value="SAM_mthyl_Trfase_ML2640-like"/>
</dbReference>
<dbReference type="NCBIfam" id="TIGR00027">
    <property type="entry name" value="mthyl_TIGR00027"/>
    <property type="match status" value="1"/>
</dbReference>
<dbReference type="PANTHER" id="PTHR43619">
    <property type="entry name" value="S-ADENOSYL-L-METHIONINE-DEPENDENT METHYLTRANSFERASE YKTD-RELATED"/>
    <property type="match status" value="1"/>
</dbReference>
<dbReference type="PANTHER" id="PTHR43619:SF2">
    <property type="entry name" value="S-ADENOSYL-L-METHIONINE-DEPENDENT METHYLTRANSFERASES SUPERFAMILY PROTEIN"/>
    <property type="match status" value="1"/>
</dbReference>
<dbReference type="Pfam" id="PF04072">
    <property type="entry name" value="LCM"/>
    <property type="match status" value="1"/>
</dbReference>
<dbReference type="SUPFAM" id="SSF53335">
    <property type="entry name" value="S-adenosyl-L-methionine-dependent methyltransferases"/>
    <property type="match status" value="1"/>
</dbReference>
<sequence>MTTPQFGSQRSDDDNWDIVSSVGYTALLVAGWRALHAVSPRPLVRDDYAKTFIAASGDPYLTGVLANPGTSEDELAFPRLYGVQTRFFDDFFDAAGAAGIRQAVIIAAGLDSRAYRLEWPPATTVFEVDLAKVLEFKARVLGEQGAVPKARRVEVAADLRADWSRPLEAAGFDVESPSAWSVEGLLPYLTDEAQHALFTRISGLSAPGSRIAIGALGSRLDHDQLHALEESHPGVDVSGNVDFSALTYEPQSDPAEWLAAHGWVVDPVRNTLDLQAGYGMTPPEVDVKIDGFMRSQYITAAR</sequence>
<keyword id="KW-0489">Methyltransferase</keyword>
<keyword id="KW-0949">S-adenosyl-L-methionine</keyword>
<keyword id="KW-0808">Transferase</keyword>
<accession>A0QGF2</accession>
<reference key="1">
    <citation type="submission" date="2006-10" db="EMBL/GenBank/DDBJ databases">
        <authorList>
            <person name="Fleischmann R.D."/>
            <person name="Dodson R.J."/>
            <person name="Haft D.H."/>
            <person name="Merkel J.S."/>
            <person name="Nelson W.C."/>
            <person name="Fraser C.M."/>
        </authorList>
    </citation>
    <scope>NUCLEOTIDE SEQUENCE [LARGE SCALE GENOMIC DNA]</scope>
    <source>
        <strain>104</strain>
    </source>
</reference>
<evidence type="ECO:0000250" key="1"/>
<evidence type="ECO:0000305" key="2"/>
<feature type="chain" id="PRO_0000361104" description="Putative S-adenosyl-L-methionine-dependent methyltransferase MAV_2803">
    <location>
        <begin position="1"/>
        <end position="302"/>
    </location>
</feature>
<feature type="binding site" evidence="1">
    <location>
        <position position="129"/>
    </location>
    <ligand>
        <name>S-adenosyl-L-methionine</name>
        <dbReference type="ChEBI" id="CHEBI:59789"/>
    </ligand>
</feature>
<feature type="binding site" evidence="1">
    <location>
        <begin position="158"/>
        <end position="159"/>
    </location>
    <ligand>
        <name>S-adenosyl-L-methionine</name>
        <dbReference type="ChEBI" id="CHEBI:59789"/>
    </ligand>
</feature>